<comment type="function">
    <text evidence="1">Releases the supercoiling and torsional tension of DNA introduced during the DNA replication and transcription by transiently cleaving and rejoining one strand of the DNA duplex. Introduces a single-strand break via transesterification at a target site in duplex DNA. The scissile phosphodiester is attacked by the catalytic tyrosine of the enzyme, resulting in the formation of a DNA-(5'-phosphotyrosyl)-enzyme intermediate and the expulsion of a 3'-OH DNA strand. The free DNA strand than undergoes passage around the unbroken strand thus removing DNA supercoils. Finally, in the religation step, the DNA 3'-OH attacks the covalent intermediate to expel the active-site tyrosine and restore the DNA phosphodiester backbone (By similarity).</text>
</comment>
<comment type="catalytic activity">
    <reaction evidence="4">
        <text>ATP-independent breakage of single-stranded DNA, followed by passage and rejoining.</text>
        <dbReference type="EC" id="5.6.2.1"/>
    </reaction>
</comment>
<comment type="similarity">
    <text evidence="3 6">Belongs to the type IA topoisomerase family.</text>
</comment>
<keyword id="KW-0238">DNA-binding</keyword>
<keyword id="KW-0413">Isomerase</keyword>
<keyword id="KW-1185">Reference proteome</keyword>
<keyword id="KW-0799">Topoisomerase</keyword>
<accession>Q8T2T7</accession>
<accession>Q554F7</accession>
<feature type="chain" id="PRO_0000330480" description="DNA topoisomerase 3">
    <location>
        <begin position="1"/>
        <end position="828"/>
    </location>
</feature>
<feature type="domain" description="Toprim" evidence="2">
    <location>
        <begin position="4"/>
        <end position="149"/>
    </location>
</feature>
<feature type="domain" description="Topo IA-type catalytic" evidence="3">
    <location>
        <begin position="167"/>
        <end position="617"/>
    </location>
</feature>
<feature type="region of interest" description="Disordered" evidence="5">
    <location>
        <begin position="763"/>
        <end position="828"/>
    </location>
</feature>
<feature type="active site" description="O-(5'-phospho-DNA)-tyrosine intermediate" evidence="3">
    <location>
        <position position="361"/>
    </location>
</feature>
<name>TOP3_DICDI</name>
<dbReference type="EC" id="5.6.2.1" evidence="4"/>
<dbReference type="EMBL" id="AAFI02000013">
    <property type="protein sequence ID" value="EAL69909.2"/>
    <property type="molecule type" value="Genomic_DNA"/>
</dbReference>
<dbReference type="RefSeq" id="XP_643754.2">
    <property type="nucleotide sequence ID" value="XM_638662.2"/>
</dbReference>
<dbReference type="SMR" id="Q8T2T7"/>
<dbReference type="FunCoup" id="Q8T2T7">
    <property type="interactions" value="732"/>
</dbReference>
<dbReference type="STRING" id="44689.Q8T2T7"/>
<dbReference type="PaxDb" id="44689-DDB0234226"/>
<dbReference type="EnsemblProtists" id="EAL69909">
    <property type="protein sequence ID" value="EAL69909"/>
    <property type="gene ID" value="DDB_G0275257"/>
</dbReference>
<dbReference type="GeneID" id="8619798"/>
<dbReference type="KEGG" id="ddi:DDB_G0275257"/>
<dbReference type="dictyBase" id="DDB_G0275257">
    <property type="gene designation" value="top3"/>
</dbReference>
<dbReference type="VEuPathDB" id="AmoebaDB:DDB_G0275257"/>
<dbReference type="eggNOG" id="KOG1956">
    <property type="taxonomic scope" value="Eukaryota"/>
</dbReference>
<dbReference type="HOGENOM" id="CLU_002929_1_2_1"/>
<dbReference type="InParanoid" id="Q8T2T7"/>
<dbReference type="OMA" id="MELAMGD"/>
<dbReference type="PhylomeDB" id="Q8T2T7"/>
<dbReference type="PRO" id="PR:Q8T2T7"/>
<dbReference type="Proteomes" id="UP000002195">
    <property type="component" value="Chromosome 2"/>
</dbReference>
<dbReference type="GO" id="GO:0005634">
    <property type="term" value="C:nucleus"/>
    <property type="evidence" value="ECO:0000318"/>
    <property type="project" value="GO_Central"/>
</dbReference>
<dbReference type="GO" id="GO:0031422">
    <property type="term" value="C:RecQ family helicase-topoisomerase III complex"/>
    <property type="evidence" value="ECO:0000318"/>
    <property type="project" value="GO_Central"/>
</dbReference>
<dbReference type="GO" id="GO:0003677">
    <property type="term" value="F:DNA binding"/>
    <property type="evidence" value="ECO:0007669"/>
    <property type="project" value="UniProtKB-KW"/>
</dbReference>
<dbReference type="GO" id="GO:0003917">
    <property type="term" value="F:DNA topoisomerase type I (single strand cut, ATP-independent) activity"/>
    <property type="evidence" value="ECO:0000318"/>
    <property type="project" value="GO_Central"/>
</dbReference>
<dbReference type="GO" id="GO:0006310">
    <property type="term" value="P:DNA recombination"/>
    <property type="evidence" value="ECO:0000318"/>
    <property type="project" value="GO_Central"/>
</dbReference>
<dbReference type="GO" id="GO:0006281">
    <property type="term" value="P:DNA repair"/>
    <property type="evidence" value="ECO:0000318"/>
    <property type="project" value="GO_Central"/>
</dbReference>
<dbReference type="GO" id="GO:0006265">
    <property type="term" value="P:DNA topological change"/>
    <property type="evidence" value="ECO:0000318"/>
    <property type="project" value="GO_Central"/>
</dbReference>
<dbReference type="CDD" id="cd00186">
    <property type="entry name" value="TOP1Ac"/>
    <property type="match status" value="1"/>
</dbReference>
<dbReference type="CDD" id="cd03362">
    <property type="entry name" value="TOPRIM_TopoIA_TopoIII"/>
    <property type="match status" value="1"/>
</dbReference>
<dbReference type="FunFam" id="1.10.290.10:FF:000001">
    <property type="entry name" value="DNA topoisomerase"/>
    <property type="match status" value="1"/>
</dbReference>
<dbReference type="FunFam" id="3.40.50.140:FF:000003">
    <property type="entry name" value="DNA topoisomerase"/>
    <property type="match status" value="1"/>
</dbReference>
<dbReference type="Gene3D" id="3.40.50.140">
    <property type="match status" value="1"/>
</dbReference>
<dbReference type="Gene3D" id="1.10.460.10">
    <property type="entry name" value="Topoisomerase I, domain 2"/>
    <property type="match status" value="1"/>
</dbReference>
<dbReference type="Gene3D" id="2.70.20.10">
    <property type="entry name" value="Topoisomerase I, domain 3"/>
    <property type="match status" value="1"/>
</dbReference>
<dbReference type="Gene3D" id="1.10.290.10">
    <property type="entry name" value="Topoisomerase I, domain 4"/>
    <property type="match status" value="1"/>
</dbReference>
<dbReference type="InterPro" id="IPR000380">
    <property type="entry name" value="Topo_IA"/>
</dbReference>
<dbReference type="InterPro" id="IPR003601">
    <property type="entry name" value="Topo_IA_2"/>
</dbReference>
<dbReference type="InterPro" id="IPR023406">
    <property type="entry name" value="Topo_IA_AS"/>
</dbReference>
<dbReference type="InterPro" id="IPR013497">
    <property type="entry name" value="Topo_IA_cen"/>
</dbReference>
<dbReference type="InterPro" id="IPR013824">
    <property type="entry name" value="Topo_IA_cen_sub1"/>
</dbReference>
<dbReference type="InterPro" id="IPR013825">
    <property type="entry name" value="Topo_IA_cen_sub2"/>
</dbReference>
<dbReference type="InterPro" id="IPR013826">
    <property type="entry name" value="Topo_IA_cen_sub3"/>
</dbReference>
<dbReference type="InterPro" id="IPR023405">
    <property type="entry name" value="Topo_IA_core_domain"/>
</dbReference>
<dbReference type="InterPro" id="IPR003602">
    <property type="entry name" value="Topo_IA_DNA-bd_dom"/>
</dbReference>
<dbReference type="InterPro" id="IPR006171">
    <property type="entry name" value="TOPRIM_dom"/>
</dbReference>
<dbReference type="InterPro" id="IPR034144">
    <property type="entry name" value="TOPRIM_TopoIII"/>
</dbReference>
<dbReference type="PANTHER" id="PTHR11390:SF21">
    <property type="entry name" value="DNA TOPOISOMERASE 3-ALPHA"/>
    <property type="match status" value="1"/>
</dbReference>
<dbReference type="PANTHER" id="PTHR11390">
    <property type="entry name" value="PROKARYOTIC DNA TOPOISOMERASE"/>
    <property type="match status" value="1"/>
</dbReference>
<dbReference type="Pfam" id="PF01131">
    <property type="entry name" value="Topoisom_bac"/>
    <property type="match status" value="1"/>
</dbReference>
<dbReference type="Pfam" id="PF01751">
    <property type="entry name" value="Toprim"/>
    <property type="match status" value="1"/>
</dbReference>
<dbReference type="PRINTS" id="PR00417">
    <property type="entry name" value="PRTPISMRASEI"/>
</dbReference>
<dbReference type="SMART" id="SM00437">
    <property type="entry name" value="TOP1Ac"/>
    <property type="match status" value="1"/>
</dbReference>
<dbReference type="SMART" id="SM00436">
    <property type="entry name" value="TOP1Bc"/>
    <property type="match status" value="1"/>
</dbReference>
<dbReference type="SMART" id="SM00493">
    <property type="entry name" value="TOPRIM"/>
    <property type="match status" value="1"/>
</dbReference>
<dbReference type="SUPFAM" id="SSF56712">
    <property type="entry name" value="Prokaryotic type I DNA topoisomerase"/>
    <property type="match status" value="1"/>
</dbReference>
<dbReference type="PROSITE" id="PS00396">
    <property type="entry name" value="TOPO_IA_1"/>
    <property type="match status" value="1"/>
</dbReference>
<dbReference type="PROSITE" id="PS52039">
    <property type="entry name" value="TOPO_IA_2"/>
    <property type="match status" value="1"/>
</dbReference>
<dbReference type="PROSITE" id="PS50880">
    <property type="entry name" value="TOPRIM"/>
    <property type="match status" value="1"/>
</dbReference>
<organism>
    <name type="scientific">Dictyostelium discoideum</name>
    <name type="common">Social amoeba</name>
    <dbReference type="NCBI Taxonomy" id="44689"/>
    <lineage>
        <taxon>Eukaryota</taxon>
        <taxon>Amoebozoa</taxon>
        <taxon>Evosea</taxon>
        <taxon>Eumycetozoa</taxon>
        <taxon>Dictyostelia</taxon>
        <taxon>Dictyosteliales</taxon>
        <taxon>Dictyosteliaceae</taxon>
        <taxon>Dictyostelium</taxon>
    </lineage>
</organism>
<sequence length="828" mass="94639">MTKRILNVAEKPSAAKEIAAILSNKRATVREGFSKYNKLWDFKYNILNFNDCEMTFTSVTGHLMEIDVVEQFKPWASCDPIQLFDAPIRKTVPSDKEPLKKTLEREIKKADILILWLDCDREGENIAFEVLEVCKNAKKKFEFYRAHFSAIIPREIDRACKNLAKPNEKDSIAVDTRMEIDLRIGAAFTRFQTLYLKKFKIISNSDNQPKTTTPANGNILNNSNNNSSGKEIISYGPCQFPTLGFVVERYFRIVNFKPEDFWHLSVVHEKMDTSSGKMIPVTFSWCRNRLFDYTAAFILYEKCLDNTEATVVDVTSKESRYRPVPLTTIELQKAASKKLRISSVQTMQYAEELYTKGLISYPRTETDSFQAGTDLKGLIGNQASNPEWGAYASRLINNNQFVYPKSGKNNDNSHPPIHPTSSATGLSGNLKKIYDFITRRFLACCSEESVFANTTVTIDIQGERFSETGTMVLKLGYLEVYPFDKRNDKLIPTYQKGERFTPKRIDLTKGTTVAPHYITEAELLTAMDNNKIGTDATMATHIQTIQDRFYVKKNESNQFVPSNLGVSLVASYELMGFEFSKPNLRAAIEADVDKISRGQKTKQEVLLSTIEKYKQLYQLANQNINCFDRSFREYYEPADPKGGEFRVLVSQFSRCGKCNGKMQYKSDQNPEAPKRILFCPQCIDTFDLPKNGDISQLVTSMGVPQNCPICQYQVLSVRNPINDKSYTICPKCRNSPPDPIHKKPFHCFQCTFNCNLATGNKQQQQQQQQQQQQTNYNRNNNNNNTNSARPITTRTTRTTTQHRTFTASNNNFNNNNRNSDRNNNNFIF</sequence>
<reference key="1">
    <citation type="journal article" date="2002" name="Nature">
        <title>Sequence and analysis of chromosome 2 of Dictyostelium discoideum.</title>
        <authorList>
            <person name="Gloeckner G."/>
            <person name="Eichinger L."/>
            <person name="Szafranski K."/>
            <person name="Pachebat J.A."/>
            <person name="Bankier A.T."/>
            <person name="Dear P.H."/>
            <person name="Lehmann R."/>
            <person name="Baumgart C."/>
            <person name="Parra G."/>
            <person name="Abril J.F."/>
            <person name="Guigo R."/>
            <person name="Kumpf K."/>
            <person name="Tunggal B."/>
            <person name="Cox E.C."/>
            <person name="Quail M.A."/>
            <person name="Platzer M."/>
            <person name="Rosenthal A."/>
            <person name="Noegel A.A."/>
        </authorList>
    </citation>
    <scope>NUCLEOTIDE SEQUENCE [LARGE SCALE GENOMIC DNA]</scope>
    <source>
        <strain>AX4</strain>
    </source>
</reference>
<reference key="2">
    <citation type="journal article" date="2005" name="Nature">
        <title>The genome of the social amoeba Dictyostelium discoideum.</title>
        <authorList>
            <person name="Eichinger L."/>
            <person name="Pachebat J.A."/>
            <person name="Gloeckner G."/>
            <person name="Rajandream M.A."/>
            <person name="Sucgang R."/>
            <person name="Berriman M."/>
            <person name="Song J."/>
            <person name="Olsen R."/>
            <person name="Szafranski K."/>
            <person name="Xu Q."/>
            <person name="Tunggal B."/>
            <person name="Kummerfeld S."/>
            <person name="Madera M."/>
            <person name="Konfortov B.A."/>
            <person name="Rivero F."/>
            <person name="Bankier A.T."/>
            <person name="Lehmann R."/>
            <person name="Hamlin N."/>
            <person name="Davies R."/>
            <person name="Gaudet P."/>
            <person name="Fey P."/>
            <person name="Pilcher K."/>
            <person name="Chen G."/>
            <person name="Saunders D."/>
            <person name="Sodergren E.J."/>
            <person name="Davis P."/>
            <person name="Kerhornou A."/>
            <person name="Nie X."/>
            <person name="Hall N."/>
            <person name="Anjard C."/>
            <person name="Hemphill L."/>
            <person name="Bason N."/>
            <person name="Farbrother P."/>
            <person name="Desany B."/>
            <person name="Just E."/>
            <person name="Morio T."/>
            <person name="Rost R."/>
            <person name="Churcher C.M."/>
            <person name="Cooper J."/>
            <person name="Haydock S."/>
            <person name="van Driessche N."/>
            <person name="Cronin A."/>
            <person name="Goodhead I."/>
            <person name="Muzny D.M."/>
            <person name="Mourier T."/>
            <person name="Pain A."/>
            <person name="Lu M."/>
            <person name="Harper D."/>
            <person name="Lindsay R."/>
            <person name="Hauser H."/>
            <person name="James K.D."/>
            <person name="Quiles M."/>
            <person name="Madan Babu M."/>
            <person name="Saito T."/>
            <person name="Buchrieser C."/>
            <person name="Wardroper A."/>
            <person name="Felder M."/>
            <person name="Thangavelu M."/>
            <person name="Johnson D."/>
            <person name="Knights A."/>
            <person name="Loulseged H."/>
            <person name="Mungall K.L."/>
            <person name="Oliver K."/>
            <person name="Price C."/>
            <person name="Quail M.A."/>
            <person name="Urushihara H."/>
            <person name="Hernandez J."/>
            <person name="Rabbinowitsch E."/>
            <person name="Steffen D."/>
            <person name="Sanders M."/>
            <person name="Ma J."/>
            <person name="Kohara Y."/>
            <person name="Sharp S."/>
            <person name="Simmonds M.N."/>
            <person name="Spiegler S."/>
            <person name="Tivey A."/>
            <person name="Sugano S."/>
            <person name="White B."/>
            <person name="Walker D."/>
            <person name="Woodward J.R."/>
            <person name="Winckler T."/>
            <person name="Tanaka Y."/>
            <person name="Shaulsky G."/>
            <person name="Schleicher M."/>
            <person name="Weinstock G.M."/>
            <person name="Rosenthal A."/>
            <person name="Cox E.C."/>
            <person name="Chisholm R.L."/>
            <person name="Gibbs R.A."/>
            <person name="Loomis W.F."/>
            <person name="Platzer M."/>
            <person name="Kay R.R."/>
            <person name="Williams J.G."/>
            <person name="Dear P.H."/>
            <person name="Noegel A.A."/>
            <person name="Barrell B.G."/>
            <person name="Kuspa A."/>
        </authorList>
    </citation>
    <scope>NUCLEOTIDE SEQUENCE [LARGE SCALE GENOMIC DNA]</scope>
    <source>
        <strain>AX4</strain>
    </source>
</reference>
<gene>
    <name type="primary">top3</name>
    <name type="ORF">DDB_G0275257</name>
</gene>
<evidence type="ECO:0000250" key="1"/>
<evidence type="ECO:0000255" key="2">
    <source>
        <dbReference type="PROSITE-ProRule" id="PRU00995"/>
    </source>
</evidence>
<evidence type="ECO:0000255" key="3">
    <source>
        <dbReference type="PROSITE-ProRule" id="PRU01383"/>
    </source>
</evidence>
<evidence type="ECO:0000255" key="4">
    <source>
        <dbReference type="PROSITE-ProRule" id="PRU10131"/>
    </source>
</evidence>
<evidence type="ECO:0000256" key="5">
    <source>
        <dbReference type="SAM" id="MobiDB-lite"/>
    </source>
</evidence>
<evidence type="ECO:0000305" key="6"/>
<proteinExistence type="inferred from homology"/>
<protein>
    <recommendedName>
        <fullName>DNA topoisomerase 3</fullName>
        <ecNumber evidence="4">5.6.2.1</ecNumber>
    </recommendedName>
    <alternativeName>
        <fullName>DNA topoisomerase III</fullName>
    </alternativeName>
</protein>